<comment type="function">
    <text>Produces ATP from ADP in the presence of a proton gradient across the membrane.</text>
</comment>
<comment type="subcellular location">
    <subcellularLocation>
        <location evidence="2">Cell membrane</location>
        <topology evidence="2">Multi-pass membrane protein</topology>
    </subcellularLocation>
</comment>
<comment type="similarity">
    <text evidence="2">Belongs to the V-ATPase 116 kDa subunit family.</text>
</comment>
<protein>
    <recommendedName>
        <fullName>V-type ATP synthase subunit I 1</fullName>
    </recommendedName>
    <alternativeName>
        <fullName>V-ATPase subunit I 1</fullName>
    </alternativeName>
</protein>
<keyword id="KW-1003">Cell membrane</keyword>
<keyword id="KW-0375">Hydrogen ion transport</keyword>
<keyword id="KW-0406">Ion transport</keyword>
<keyword id="KW-0472">Membrane</keyword>
<keyword id="KW-1185">Reference proteome</keyword>
<keyword id="KW-0812">Transmembrane</keyword>
<keyword id="KW-1133">Transmembrane helix</keyword>
<keyword id="KW-0813">Transport</keyword>
<organism>
    <name type="scientific">Treponema pallidum (strain Nichols)</name>
    <dbReference type="NCBI Taxonomy" id="243276"/>
    <lineage>
        <taxon>Bacteria</taxon>
        <taxon>Pseudomonadati</taxon>
        <taxon>Spirochaetota</taxon>
        <taxon>Spirochaetia</taxon>
        <taxon>Spirochaetales</taxon>
        <taxon>Treponemataceae</taxon>
        <taxon>Treponema</taxon>
    </lineage>
</organism>
<sequence length="622" mass="69077">MIVPMKKVTLLVLGSEQERSLQALRSFGAVHVQLRECASEQLAELHALDARCVQAIALVTDAQTKNVTRGEECRVAGQVVEAAEAVEQIVRTHSDRVELAQRIAQCIAHLERCEPWGDFDPADVRALAQRGIHLIPVELSERSYRCLPDELQTLCLARRGGLVRCVLVADKPGLPPSLPADARALELPDVSPADLFVRLRQLREECATLTQRLLAYSEYQGAIRALRQKIAADIEFERVHLSMVSVDVSQWRETGETLRIAHVSGYLPVSRVRAFSECARKEAWAYCCVDPMPEDPVPTQLRNNRWVNLISPLMNFLGTVPGYWEVDISGFFLLFFGVFFSIIFADAGYGAVLTLVSLGGIVLSKRKHAVVSPAWCLGLYLGTLTMVWGALVCNWFGVPVQYVPASLARIAVWEISGFADAAQRNKNQMHVCFFLGLLHLCLGHLIVVRRTFRSLRVLAEFGSLLMLGGMYVVVLNLIVDKERYPLTGMIVGSIIAGFVLNFIFVNYRVSVRQSVADSMKNVINALLGIVNVFADVMSYIRLWAVGLAGGAISATVNEMTHPLFANFLAFLGIVLLLFGHGLNYVMSILSVIVHGVRLNTLEFSNHVGLMWTGIRYTPFRER</sequence>
<accession>O83444</accession>
<feature type="chain" id="PRO_0000119242" description="V-type ATP synthase subunit I 1">
    <location>
        <begin position="1"/>
        <end position="622"/>
    </location>
</feature>
<feature type="transmembrane region" description="Helical" evidence="1">
    <location>
        <begin position="306"/>
        <end position="326"/>
    </location>
</feature>
<feature type="transmembrane region" description="Helical" evidence="1">
    <location>
        <begin position="328"/>
        <end position="348"/>
    </location>
</feature>
<feature type="transmembrane region" description="Helical" evidence="1">
    <location>
        <begin position="373"/>
        <end position="393"/>
    </location>
</feature>
<feature type="transmembrane region" description="Helical" evidence="1">
    <location>
        <begin position="428"/>
        <end position="448"/>
    </location>
</feature>
<feature type="transmembrane region" description="Helical" evidence="1">
    <location>
        <begin position="459"/>
        <end position="479"/>
    </location>
</feature>
<feature type="transmembrane region" description="Helical" evidence="1">
    <location>
        <begin position="485"/>
        <end position="505"/>
    </location>
</feature>
<feature type="transmembrane region" description="Helical" evidence="1">
    <location>
        <begin position="532"/>
        <end position="552"/>
    </location>
</feature>
<feature type="transmembrane region" description="Helical" evidence="1">
    <location>
        <begin position="562"/>
        <end position="582"/>
    </location>
</feature>
<dbReference type="EMBL" id="AE000520">
    <property type="protein sequence ID" value="AAC65415.1"/>
    <property type="molecule type" value="Genomic_DNA"/>
</dbReference>
<dbReference type="PIR" id="B71326">
    <property type="entry name" value="B71326"/>
</dbReference>
<dbReference type="SMR" id="O83444"/>
<dbReference type="STRING" id="243276.TP_0429"/>
<dbReference type="TCDB" id="3.A.2.3.3">
    <property type="family name" value="the h+- or na+-translocating f-type, v-type and a-type atpase (f-atpase) superfamily"/>
</dbReference>
<dbReference type="EnsemblBacteria" id="AAC65415">
    <property type="protein sequence ID" value="AAC65415"/>
    <property type="gene ID" value="TP_0429"/>
</dbReference>
<dbReference type="KEGG" id="tpa:TP_0429"/>
<dbReference type="KEGG" id="tpw:TPANIC_0429"/>
<dbReference type="eggNOG" id="COG1269">
    <property type="taxonomic scope" value="Bacteria"/>
</dbReference>
<dbReference type="HOGENOM" id="CLU_025558_1_1_12"/>
<dbReference type="OrthoDB" id="9803814at2"/>
<dbReference type="Proteomes" id="UP000000811">
    <property type="component" value="Chromosome"/>
</dbReference>
<dbReference type="GO" id="GO:0005886">
    <property type="term" value="C:plasma membrane"/>
    <property type="evidence" value="ECO:0007669"/>
    <property type="project" value="UniProtKB-SubCell"/>
</dbReference>
<dbReference type="GO" id="GO:0033179">
    <property type="term" value="C:proton-transporting V-type ATPase, V0 domain"/>
    <property type="evidence" value="ECO:0007669"/>
    <property type="project" value="InterPro"/>
</dbReference>
<dbReference type="GO" id="GO:0016471">
    <property type="term" value="C:vacuolar proton-transporting V-type ATPase complex"/>
    <property type="evidence" value="ECO:0007669"/>
    <property type="project" value="TreeGrafter"/>
</dbReference>
<dbReference type="GO" id="GO:0051117">
    <property type="term" value="F:ATPase binding"/>
    <property type="evidence" value="ECO:0007669"/>
    <property type="project" value="TreeGrafter"/>
</dbReference>
<dbReference type="GO" id="GO:0046961">
    <property type="term" value="F:proton-transporting ATPase activity, rotational mechanism"/>
    <property type="evidence" value="ECO:0007669"/>
    <property type="project" value="InterPro"/>
</dbReference>
<dbReference type="GO" id="GO:0007035">
    <property type="term" value="P:vacuolar acidification"/>
    <property type="evidence" value="ECO:0007669"/>
    <property type="project" value="TreeGrafter"/>
</dbReference>
<dbReference type="InterPro" id="IPR002490">
    <property type="entry name" value="V-ATPase_116kDa_su"/>
</dbReference>
<dbReference type="NCBIfam" id="NF004429">
    <property type="entry name" value="PRK05771.2-2"/>
    <property type="match status" value="1"/>
</dbReference>
<dbReference type="PANTHER" id="PTHR11629:SF63">
    <property type="entry name" value="V-TYPE PROTON ATPASE SUBUNIT A"/>
    <property type="match status" value="1"/>
</dbReference>
<dbReference type="PANTHER" id="PTHR11629">
    <property type="entry name" value="VACUOLAR PROTON ATPASES"/>
    <property type="match status" value="1"/>
</dbReference>
<proteinExistence type="inferred from homology"/>
<name>VATI1_TREPA</name>
<reference key="1">
    <citation type="journal article" date="1998" name="Science">
        <title>Complete genome sequence of Treponema pallidum, the syphilis spirochete.</title>
        <authorList>
            <person name="Fraser C.M."/>
            <person name="Norris S.J."/>
            <person name="Weinstock G.M."/>
            <person name="White O."/>
            <person name="Sutton G.G."/>
            <person name="Dodson R.J."/>
            <person name="Gwinn M.L."/>
            <person name="Hickey E.K."/>
            <person name="Clayton R.A."/>
            <person name="Ketchum K.A."/>
            <person name="Sodergren E."/>
            <person name="Hardham J.M."/>
            <person name="McLeod M.P."/>
            <person name="Salzberg S.L."/>
            <person name="Peterson J.D."/>
            <person name="Khalak H.G."/>
            <person name="Richardson D.L."/>
            <person name="Howell J.K."/>
            <person name="Chidambaram M."/>
            <person name="Utterback T.R."/>
            <person name="McDonald L.A."/>
            <person name="Artiach P."/>
            <person name="Bowman C."/>
            <person name="Cotton M.D."/>
            <person name="Fujii C."/>
            <person name="Garland S.A."/>
            <person name="Hatch B."/>
            <person name="Horst K."/>
            <person name="Roberts K.M."/>
            <person name="Sandusky M."/>
            <person name="Weidman J.F."/>
            <person name="Smith H.O."/>
            <person name="Venter J.C."/>
        </authorList>
    </citation>
    <scope>NUCLEOTIDE SEQUENCE [LARGE SCALE GENOMIC DNA]</scope>
    <source>
        <strain>Nichols</strain>
    </source>
</reference>
<gene>
    <name type="primary">atpI1</name>
    <name type="ordered locus">TP_0429</name>
</gene>
<evidence type="ECO:0000255" key="1"/>
<evidence type="ECO:0000305" key="2"/>